<proteinExistence type="evidence at transcript level"/>
<gene>
    <name evidence="1" type="primary">Nlrp1a</name>
    <name evidence="12" type="synonym">Nlrp1</name>
</gene>
<accession>D9I2H0</accession>
<sequence>MGESQSKQESNTRVAQHGSQQDVDPTFQTKRALERERSSPQVEQSFLGQLQSLLGWSSTSKDVPLSQLIREMDHESRRHSHQSKKKLDRSEHISEGTIPEIYEKRKETISHTQSMEQKYLFQNFTKLLLLQKCCPGGSEKLVRESWHPCVPEEGGHMIEIQDLFDPNLDTEKKPQLVIIEGAAGIGKSTLARQVKRAWDEGQLYRDRFQHVFFFSCRELAQCKQLSLAELIAQGQEVPTAPTRQILSRPEKLLFILDGIDEPAWVLEDQNPELCVHWSQAQPVHTLLGSLLGKSILPEASLMLTARTTALQKLVPSLGQPHRVEVLGFSEFERKDYFYKYFAKERNTIIDFNLIGSIPVLLTLCEVPWVCWLLCTCLEKQMQQGEVLSLTSQTTTALCLKYLSLTIPGQHLSTQLRTLCSLAAEGICQRRTLFSKSDLCKQGLAEDAIATFLKIGVLQRQPSSLSYSFAHLCLQEFFAAMSYILEDSEEAHGDMGNDRTVETLVERYGRQNLFEAPTVRFLLGLLNTREMREMENIFACKFPWETKLKLLQSIIGEPFCQPCHLGLFHCLYENQEEELLTETMLCFPLTASGPNHMEATVFQTNVKRLVIQTDMELMVVTFCITFSHVRSLRLKGKGQQEYKLTAPAMVLYRWTPISEASWKVLFSNLKCTRNLEELDLSGNPLSYSAVRSLCTALRQPGCRLKTLWLVDCGLTSRCCSFLASMLSAHSRLAELDLRLNDLGDNGVRQLCEGLRNPACNLSILRLDQASLSEQVITELRALETKNPKLFISSTWMSHMTMPTENTDGEESLTSSKQQQQQSGDKHMEPLGTDDDFWGPSGPVSTEVVDRERNLYRVRLPMAGSYHCPSTGLHFVVTRAVTIEIGFCAWSQFLHETPLQHSHMVAGPLFDIKAEHGAVTAVCLPHFVSLQEGKVDSSLFHVAHFQDHGMVLETPARVEPHFAVLENPSFSPMGVLLRMIPAVGHFIPITSITLIYYRLYLEDITFHLYLVPNDCTIRKAIDEEELKFQFVRINKPPPVDALYVGSRYIVSSSKEVEILPKELELCYRSPRESQLFSEIYVGNIGSGINLQLTDKKYMNLIWEALLKPGDLRPALPRMASAPKDAPALLHFVDQHREQLVARVTSVDPLLDKLHGLVLSEEDYETVRAEATNQDKMRKLFRGSRSWSWDCKDHFYQALKETHPHLIMDLLEKSGGVSVRL</sequence>
<reference key="1">
    <citation type="journal article" date="2010" name="PLoS Pathog.">
        <title>Susceptibility to anthrax lethal toxin-induced rat death is controlled by a single chromosome 10 locus that includes rNlrp1.</title>
        <authorList>
            <person name="Newman Z.L."/>
            <person name="Printz M.P."/>
            <person name="Liu S."/>
            <person name="Crown D."/>
            <person name="Breen L."/>
            <person name="Miller-Randolph S."/>
            <person name="Flodman P."/>
            <person name="Leppla S.H."/>
            <person name="Moayeri M."/>
        </authorList>
    </citation>
    <scope>NUCLEOTIDE SEQUENCE [MRNA]</scope>
    <scope>ACTIVITY REGULATION</scope>
    <source>
        <strain evidence="14">Z</strain>
    </source>
</reference>
<reference key="2">
    <citation type="journal article" date="2019" name="Cell Death Dis.">
        <title>DPP8/9 inhibitors are universal activators of functional NLRP1 alleles.</title>
        <authorList>
            <person name="Gai K."/>
            <person name="Okondo M.C."/>
            <person name="Rao S.D."/>
            <person name="Chui A.J."/>
            <person name="Ball D.P."/>
            <person name="Johnson D.C."/>
            <person name="Bachovchin D.A."/>
        </authorList>
    </citation>
    <scope>FUNCTION</scope>
    <scope>ACTIVITY REGULATION</scope>
</reference>
<reference key="3">
    <citation type="journal article" date="2020" name="Immunol. Rev.">
        <title>The NLRP1 and CARD8 inflammasomes.</title>
        <authorList>
            <person name="Taabazuing C.Y."/>
            <person name="Griswold A.R."/>
            <person name="Bachovchin D.A."/>
        </authorList>
    </citation>
    <scope>REVIEW</scope>
</reference>
<organism>
    <name type="scientific">Rattus norvegicus</name>
    <name type="common">Rat</name>
    <dbReference type="NCBI Taxonomy" id="10116"/>
    <lineage>
        <taxon>Eukaryota</taxon>
        <taxon>Metazoa</taxon>
        <taxon>Chordata</taxon>
        <taxon>Craniata</taxon>
        <taxon>Vertebrata</taxon>
        <taxon>Euteleostomi</taxon>
        <taxon>Mammalia</taxon>
        <taxon>Eutheria</taxon>
        <taxon>Euarchontoglires</taxon>
        <taxon>Glires</taxon>
        <taxon>Rodentia</taxon>
        <taxon>Myomorpha</taxon>
        <taxon>Muroidea</taxon>
        <taxon>Muridae</taxon>
        <taxon>Murinae</taxon>
        <taxon>Rattus</taxon>
    </lineage>
</organism>
<protein>
    <recommendedName>
        <fullName evidence="13">NACHT, LRR and PYD domains-containing protein 1a allele 3</fullName>
        <ecNumber evidence="4">3.4.-.-</ecNumber>
    </recommendedName>
    <component>
        <recommendedName>
            <fullName evidence="13">NACHT, LRR and PYD domains-containing protein 1a, C-terminus</fullName>
            <shortName evidence="4">Nlrp1a-CT</shortName>
        </recommendedName>
    </component>
    <component>
        <recommendedName>
            <fullName evidence="13">NACHT, LRR and PYD domains-containing protein 1a, N-terminus</fullName>
            <shortName evidence="4">Nlrp1a-NT</shortName>
        </recommendedName>
    </component>
</protein>
<feature type="chain" id="PRO_0000452884" description="NACHT, LRR and PYD domains-containing protein 1a allele 3">
    <location>
        <begin position="1"/>
        <end position="1218"/>
    </location>
</feature>
<feature type="chain" id="PRO_0000452885" description="NACHT, LRR and PYD domains-containing protein 1a, N-terminus" evidence="4">
    <location>
        <begin position="1"/>
        <end position="968"/>
    </location>
</feature>
<feature type="chain" id="PRO_0000452886" description="NACHT, LRR and PYD domains-containing protein 1a, C-terminus" evidence="4">
    <location>
        <begin position="969"/>
        <end position="1218"/>
    </location>
</feature>
<feature type="domain" description="NACHT" evidence="7">
    <location>
        <begin position="175"/>
        <end position="484"/>
    </location>
</feature>
<feature type="repeat" description="LRR 1" evidence="5">
    <location>
        <begin position="343"/>
        <end position="364"/>
    </location>
</feature>
<feature type="repeat" description="LRR 2" evidence="5">
    <location>
        <begin position="673"/>
        <end position="693"/>
    </location>
</feature>
<feature type="repeat" description="LRR 3" evidence="5">
    <location>
        <begin position="730"/>
        <end position="750"/>
    </location>
</feature>
<feature type="domain" description="FIIND" evidence="8">
    <location>
        <begin position="835"/>
        <end position="1118"/>
    </location>
</feature>
<feature type="domain" description="CARD" evidence="6">
    <location>
        <begin position="1122"/>
        <end position="1211"/>
    </location>
</feature>
<feature type="region of interest" description="Disordered" evidence="9">
    <location>
        <begin position="1"/>
        <end position="44"/>
    </location>
</feature>
<feature type="region of interest" description="Disordered" evidence="9">
    <location>
        <begin position="71"/>
        <end position="91"/>
    </location>
</feature>
<feature type="region of interest" description="Disordered" evidence="9">
    <location>
        <begin position="799"/>
        <end position="842"/>
    </location>
</feature>
<feature type="region of interest" description="ZU5" evidence="4">
    <location>
        <begin position="835"/>
        <end position="968"/>
    </location>
</feature>
<feature type="region of interest" description="UPA" evidence="4">
    <location>
        <begin position="969"/>
        <end position="1118"/>
    </location>
</feature>
<feature type="compositionally biased region" description="Polar residues" evidence="9">
    <location>
        <begin position="1"/>
        <end position="29"/>
    </location>
</feature>
<feature type="compositionally biased region" description="Basic residues" evidence="9">
    <location>
        <begin position="77"/>
        <end position="87"/>
    </location>
</feature>
<feature type="compositionally biased region" description="Polar residues" evidence="9">
    <location>
        <begin position="799"/>
        <end position="815"/>
    </location>
</feature>
<feature type="binding site" evidence="7">
    <location>
        <begin position="181"/>
        <end position="188"/>
    </location>
    <ligand>
        <name>ATP</name>
        <dbReference type="ChEBI" id="CHEBI:30616"/>
    </ligand>
</feature>
<feature type="site" description="Trigger for autolytic processing" evidence="4">
    <location>
        <position position="942"/>
    </location>
</feature>
<feature type="site" description="Cleavage; by autolysis" evidence="8">
    <location>
        <begin position="968"/>
        <end position="969"/>
    </location>
</feature>
<dbReference type="EC" id="3.4.-.-" evidence="4"/>
<dbReference type="EMBL" id="HM060639">
    <property type="protein sequence ID" value="ADI96236.1"/>
    <property type="molecule type" value="mRNA"/>
</dbReference>
<dbReference type="SMR" id="D9I2H0"/>
<dbReference type="AGR" id="RGD:1310963"/>
<dbReference type="RGD" id="1310963">
    <property type="gene designation" value="Nlrp1a"/>
</dbReference>
<dbReference type="GO" id="GO:0005829">
    <property type="term" value="C:cytosol"/>
    <property type="evidence" value="ECO:0000266"/>
    <property type="project" value="RGD"/>
</dbReference>
<dbReference type="GO" id="GO:0043025">
    <property type="term" value="C:neuronal cell body"/>
    <property type="evidence" value="ECO:0000314"/>
    <property type="project" value="RGD"/>
</dbReference>
<dbReference type="GO" id="GO:0072558">
    <property type="term" value="C:NLRP1 inflammasome complex"/>
    <property type="evidence" value="ECO:0000266"/>
    <property type="project" value="RGD"/>
</dbReference>
<dbReference type="GO" id="GO:0072559">
    <property type="term" value="C:NLRP3 inflammasome complex"/>
    <property type="evidence" value="ECO:0000318"/>
    <property type="project" value="GO_Central"/>
</dbReference>
<dbReference type="GO" id="GO:0005634">
    <property type="term" value="C:nucleus"/>
    <property type="evidence" value="ECO:0000266"/>
    <property type="project" value="RGD"/>
</dbReference>
<dbReference type="GO" id="GO:0032991">
    <property type="term" value="C:protein-containing complex"/>
    <property type="evidence" value="ECO:0000314"/>
    <property type="project" value="RGD"/>
</dbReference>
<dbReference type="GO" id="GO:0005524">
    <property type="term" value="F:ATP binding"/>
    <property type="evidence" value="ECO:0000266"/>
    <property type="project" value="RGD"/>
</dbReference>
<dbReference type="GO" id="GO:0016887">
    <property type="term" value="F:ATP hydrolysis activity"/>
    <property type="evidence" value="ECO:0000266"/>
    <property type="project" value="RGD"/>
</dbReference>
<dbReference type="GO" id="GO:0140608">
    <property type="term" value="F:cysteine-type endopeptidase activator activity"/>
    <property type="evidence" value="ECO:0000266"/>
    <property type="project" value="RGD"/>
</dbReference>
<dbReference type="GO" id="GO:0003690">
    <property type="term" value="F:double-stranded DNA binding"/>
    <property type="evidence" value="ECO:0000266"/>
    <property type="project" value="RGD"/>
</dbReference>
<dbReference type="GO" id="GO:0003725">
    <property type="term" value="F:double-stranded RNA binding"/>
    <property type="evidence" value="ECO:0000266"/>
    <property type="project" value="RGD"/>
</dbReference>
<dbReference type="GO" id="GO:0019899">
    <property type="term" value="F:enzyme binding"/>
    <property type="evidence" value="ECO:0000266"/>
    <property type="project" value="RGD"/>
</dbReference>
<dbReference type="GO" id="GO:0140693">
    <property type="term" value="F:molecular condensate scaffold activity"/>
    <property type="evidence" value="ECO:0000266"/>
    <property type="project" value="RGD"/>
</dbReference>
<dbReference type="GO" id="GO:0038187">
    <property type="term" value="F:pattern recognition receptor activity"/>
    <property type="evidence" value="ECO:0000266"/>
    <property type="project" value="RGD"/>
</dbReference>
<dbReference type="GO" id="GO:0008233">
    <property type="term" value="F:peptidase activity"/>
    <property type="evidence" value="ECO:0007669"/>
    <property type="project" value="UniProtKB-KW"/>
</dbReference>
<dbReference type="GO" id="GO:0019904">
    <property type="term" value="F:protein domain specific binding"/>
    <property type="evidence" value="ECO:0000266"/>
    <property type="project" value="RGD"/>
</dbReference>
<dbReference type="GO" id="GO:0097110">
    <property type="term" value="F:scaffold protein binding"/>
    <property type="evidence" value="ECO:0000353"/>
    <property type="project" value="RGD"/>
</dbReference>
<dbReference type="GO" id="GO:0035591">
    <property type="term" value="F:signaling adaptor activity"/>
    <property type="evidence" value="ECO:0000266"/>
    <property type="project" value="RGD"/>
</dbReference>
<dbReference type="GO" id="GO:0002218">
    <property type="term" value="P:activation of innate immune response"/>
    <property type="evidence" value="ECO:0000318"/>
    <property type="project" value="GO_Central"/>
</dbReference>
<dbReference type="GO" id="GO:0140374">
    <property type="term" value="P:antiviral innate immune response"/>
    <property type="evidence" value="ECO:0000266"/>
    <property type="project" value="RGD"/>
</dbReference>
<dbReference type="GO" id="GO:0071493">
    <property type="term" value="P:cellular response to UV-B"/>
    <property type="evidence" value="ECO:0000266"/>
    <property type="project" value="RGD"/>
</dbReference>
<dbReference type="GO" id="GO:0042742">
    <property type="term" value="P:defense response to bacterium"/>
    <property type="evidence" value="ECO:0000266"/>
    <property type="project" value="RGD"/>
</dbReference>
<dbReference type="GO" id="GO:0051607">
    <property type="term" value="P:defense response to virus"/>
    <property type="evidence" value="ECO:0000266"/>
    <property type="project" value="RGD"/>
</dbReference>
<dbReference type="GO" id="GO:0006954">
    <property type="term" value="P:inflammatory response"/>
    <property type="evidence" value="ECO:0000318"/>
    <property type="project" value="GO_Central"/>
</dbReference>
<dbReference type="GO" id="GO:0097193">
    <property type="term" value="P:intrinsic apoptotic signaling pathway"/>
    <property type="evidence" value="ECO:0000318"/>
    <property type="project" value="GO_Central"/>
</dbReference>
<dbReference type="GO" id="GO:0051245">
    <property type="term" value="P:negative regulation of cellular defense response"/>
    <property type="evidence" value="ECO:0000315"/>
    <property type="project" value="RGD"/>
</dbReference>
<dbReference type="GO" id="GO:0051402">
    <property type="term" value="P:neuron apoptotic process"/>
    <property type="evidence" value="ECO:0000266"/>
    <property type="project" value="RGD"/>
</dbReference>
<dbReference type="GO" id="GO:1904784">
    <property type="term" value="P:NLRP1 inflammasome complex assembly"/>
    <property type="evidence" value="ECO:0000266"/>
    <property type="project" value="RGD"/>
</dbReference>
<dbReference type="GO" id="GO:0050729">
    <property type="term" value="P:positive regulation of inflammatory response"/>
    <property type="evidence" value="ECO:0000266"/>
    <property type="project" value="RGD"/>
</dbReference>
<dbReference type="GO" id="GO:0032731">
    <property type="term" value="P:positive regulation of interleukin-1 beta production"/>
    <property type="evidence" value="ECO:0000266"/>
    <property type="project" value="RGD"/>
</dbReference>
<dbReference type="GO" id="GO:0140639">
    <property type="term" value="P:positive regulation of pyroptotic inflammatory response"/>
    <property type="evidence" value="ECO:0000315"/>
    <property type="project" value="RGD"/>
</dbReference>
<dbReference type="GO" id="GO:0097300">
    <property type="term" value="P:programmed necrotic cell death"/>
    <property type="evidence" value="ECO:0000266"/>
    <property type="project" value="RGD"/>
</dbReference>
<dbReference type="GO" id="GO:0051260">
    <property type="term" value="P:protein homooligomerization"/>
    <property type="evidence" value="ECO:0000266"/>
    <property type="project" value="RGD"/>
</dbReference>
<dbReference type="GO" id="GO:0070269">
    <property type="term" value="P:pyroptotic inflammatory response"/>
    <property type="evidence" value="ECO:0000266"/>
    <property type="project" value="RGD"/>
</dbReference>
<dbReference type="GO" id="GO:0042981">
    <property type="term" value="P:regulation of apoptotic process"/>
    <property type="evidence" value="ECO:0007669"/>
    <property type="project" value="InterPro"/>
</dbReference>
<dbReference type="GO" id="GO:0050727">
    <property type="term" value="P:regulation of inflammatory response"/>
    <property type="evidence" value="ECO:0000266"/>
    <property type="project" value="RGD"/>
</dbReference>
<dbReference type="GO" id="GO:0032495">
    <property type="term" value="P:response to muramyl dipeptide"/>
    <property type="evidence" value="ECO:0000266"/>
    <property type="project" value="RGD"/>
</dbReference>
<dbReference type="GO" id="GO:0097264">
    <property type="term" value="P:self proteolysis"/>
    <property type="evidence" value="ECO:0000266"/>
    <property type="project" value="RGD"/>
</dbReference>
<dbReference type="GO" id="GO:0007165">
    <property type="term" value="P:signal transduction"/>
    <property type="evidence" value="ECO:0000266"/>
    <property type="project" value="RGD"/>
</dbReference>
<dbReference type="CDD" id="cd08330">
    <property type="entry name" value="CARD_ASC_NALP1"/>
    <property type="match status" value="1"/>
</dbReference>
<dbReference type="FunFam" id="1.10.533.10:FF:000013">
    <property type="entry name" value="Apoptosis-associated speck-like protein containing a CARD"/>
    <property type="match status" value="1"/>
</dbReference>
<dbReference type="FunFam" id="3.40.50.300:FF:000897">
    <property type="entry name" value="NLR family pyrin domain containing 1"/>
    <property type="match status" value="1"/>
</dbReference>
<dbReference type="Gene3D" id="1.10.533.10">
    <property type="entry name" value="Death Domain, Fas"/>
    <property type="match status" value="1"/>
</dbReference>
<dbReference type="Gene3D" id="3.40.50.300">
    <property type="entry name" value="P-loop containing nucleotide triphosphate hydrolases"/>
    <property type="match status" value="1"/>
</dbReference>
<dbReference type="Gene3D" id="3.80.10.10">
    <property type="entry name" value="Ribonuclease Inhibitor"/>
    <property type="match status" value="1"/>
</dbReference>
<dbReference type="InterPro" id="IPR001315">
    <property type="entry name" value="CARD"/>
</dbReference>
<dbReference type="InterPro" id="IPR033516">
    <property type="entry name" value="CARD8/ASC/NALP1_CARD"/>
</dbReference>
<dbReference type="InterPro" id="IPR011029">
    <property type="entry name" value="DEATH-like_dom_sf"/>
</dbReference>
<dbReference type="InterPro" id="IPR025307">
    <property type="entry name" value="FIIND_dom"/>
</dbReference>
<dbReference type="InterPro" id="IPR001611">
    <property type="entry name" value="Leu-rich_rpt"/>
</dbReference>
<dbReference type="InterPro" id="IPR032675">
    <property type="entry name" value="LRR_dom_sf"/>
</dbReference>
<dbReference type="InterPro" id="IPR007111">
    <property type="entry name" value="NACHT_NTPase"/>
</dbReference>
<dbReference type="InterPro" id="IPR041267">
    <property type="entry name" value="NLRP_HD2"/>
</dbReference>
<dbReference type="InterPro" id="IPR051249">
    <property type="entry name" value="NLRP_Inflammasome"/>
</dbReference>
<dbReference type="InterPro" id="IPR041075">
    <property type="entry name" value="NOD1/2_WH"/>
</dbReference>
<dbReference type="InterPro" id="IPR027417">
    <property type="entry name" value="P-loop_NTPase"/>
</dbReference>
<dbReference type="PANTHER" id="PTHR46985">
    <property type="entry name" value="NACHT, LRR AND PYD DOMAINS-CONTAINING PROTEIN 1"/>
    <property type="match status" value="1"/>
</dbReference>
<dbReference type="PANTHER" id="PTHR46985:SF3">
    <property type="entry name" value="NACHT, LRR AND PYD DOMAINS-CONTAINING PROTEIN 1"/>
    <property type="match status" value="1"/>
</dbReference>
<dbReference type="Pfam" id="PF00619">
    <property type="entry name" value="CARD"/>
    <property type="match status" value="1"/>
</dbReference>
<dbReference type="Pfam" id="PF13553">
    <property type="entry name" value="FIIND"/>
    <property type="match status" value="1"/>
</dbReference>
<dbReference type="Pfam" id="PF13516">
    <property type="entry name" value="LRR_6"/>
    <property type="match status" value="2"/>
</dbReference>
<dbReference type="Pfam" id="PF05729">
    <property type="entry name" value="NACHT"/>
    <property type="match status" value="1"/>
</dbReference>
<dbReference type="Pfam" id="PF17776">
    <property type="entry name" value="NLRC4_HD2"/>
    <property type="match status" value="1"/>
</dbReference>
<dbReference type="Pfam" id="PF17779">
    <property type="entry name" value="NOD2_WH"/>
    <property type="match status" value="1"/>
</dbReference>
<dbReference type="Pfam" id="PF23679">
    <property type="entry name" value="UPA-FIIND"/>
    <property type="match status" value="1"/>
</dbReference>
<dbReference type="PRINTS" id="PR00364">
    <property type="entry name" value="DISEASERSIST"/>
</dbReference>
<dbReference type="SMART" id="SM00368">
    <property type="entry name" value="LRR_RI"/>
    <property type="match status" value="3"/>
</dbReference>
<dbReference type="SUPFAM" id="SSF47986">
    <property type="entry name" value="DEATH domain"/>
    <property type="match status" value="1"/>
</dbReference>
<dbReference type="SUPFAM" id="SSF52540">
    <property type="entry name" value="P-loop containing nucleoside triphosphate hydrolases"/>
    <property type="match status" value="1"/>
</dbReference>
<dbReference type="SUPFAM" id="SSF52047">
    <property type="entry name" value="RNI-like"/>
    <property type="match status" value="1"/>
</dbReference>
<dbReference type="PROSITE" id="PS50209">
    <property type="entry name" value="CARD"/>
    <property type="match status" value="1"/>
</dbReference>
<dbReference type="PROSITE" id="PS51830">
    <property type="entry name" value="FIIND"/>
    <property type="match status" value="1"/>
</dbReference>
<dbReference type="PROSITE" id="PS50837">
    <property type="entry name" value="NACHT"/>
    <property type="match status" value="1"/>
</dbReference>
<name>NL1A3_RAT</name>
<comment type="function">
    <text evidence="2 3 4 11">Acts as the sensor component of the Nlrp1a inflammasome, which mediates inflammasome activation in response to various pathogen-associated signals, leading to subsequent pyroptosis (By similarity). Inflammasomes are supramolecular complexes that assemble in the cytosol in response to pathogens and other damage-associated signals and play critical roles in innate immunity and inflammation (By similarity). Acts as a recognition receptor (PRR): recognizes specific pathogens and other damage-associated signals, such as Val-boroPro inhibitor, and mediates the formation of the inflammasome polymeric complex (PubMed:31383852). In response to pathogen-associated signals, the N-terminal part of Nlrp1a is degraded by the proteasome, releasing the cleaved C-terminal part of the protein (NACHT, LRR and PYD domains-containing protein 1a, C-terminus), which polymerizes to initiate the formation of the inflammasome complex: the inflammasome directly recruits pro-caspase-1 (proCASP1) independently of PYCARD/ASC and promotes caspase-1 (CASP1) activation, which subsequently cleaves and activates inflammatory cytokines IL1B and IL18 and gasdermin-D (GSDMD), leading to pyroptosis (By similarity). In the absence of GSDMD expression, the Nlrp1a inflammasome is able to recruit and activate CASP8, leading to activation of gasdermin-E (GSDME) (By similarity).</text>
</comment>
<comment type="function">
    <molecule>NACHT, LRR and PYD domains-containing protein 1a allele 3</molecule>
    <text evidence="4">Constitutes the precursor of the Nlrp1a inflammasome, which mediates autoproteolytic processing within the FIIND domain to generate the N-terminal and C-terminal parts, which are associated non-covalently in absence of pathogens and other damage-associated signals.</text>
</comment>
<comment type="function">
    <molecule>NACHT, LRR and PYD domains-containing protein 1a, N-terminus</molecule>
    <text evidence="4">Regulatory part that prevents formation of the Nlrp1a inflammasome: in absence of pathogens and other damage-associated signals, interacts with the C-terminal part of Nlrp1a (NACHT, LRR and PYD domains-containing protein 1a, C-terminus), preventing activation of the Nlrp1a inflammasome. In response to pathogen-associated signals, this part is ubiquitinated by the N-end rule pathway and degraded by the proteasome, releasing the cleaved C-terminal part of the protein, which polymerizes and forms the Nlrp1a inflammasome.</text>
</comment>
<comment type="function">
    <molecule>NACHT, LRR and PYD domains-containing protein 1a, C-terminus</molecule>
    <text evidence="4">Constitutes the active part of the Nlrp1a inflammasome. In absence of pathogens and other damage-associated signals, interacts with the N-terminal part of Nlrp1a (NACHT, LRR and PYD domains-containing protein 1a, N-terminus), preventing activation of the Nlrp1a inflammasome. In response to pathogen-associated signals, the N-terminal part of Nlrp1a is degraded by the proteasome, releasing this form, which polymerizes to form the Nlrp1a inflammasome complex: the Nlrp1a inflammasome complex then directly recruits pro-caspase-1 (proCASP1) and promotes caspase-1 (CASP1) activation, leading to gasdermin-D (GSDMD) cleavage and subsequent pyroptosis.</text>
</comment>
<comment type="activity regulation">
    <text evidence="1 3 10 11">Activated by pathogens and other damage-associated signals: activation promotes ubiquitination and degradation of the N-terminal part, releasing the cleaved C-terminal part of the protein (NACHT, LRR and PYD domains-containing protein 1a, C-terminus), which polymerizes and forms the Nlrp1a inflammasome (By similarity). Nlrp1a inflammasome is inhibited by DPP8 and DPP9, which sequester the C-terminal fragment of Nlrp1a (NACHT, LRR and PYD domains-containing protein 1a, C-terminus) in a ternary complex, thereby preventing Nlrp1a oligomerization and activation (By similarity). Nlrp1a inflammasome is strongly activated by Val-boroPro (Talabostat, PT-100), an inhibitor of dipeptidyl peptidases DPP8 and DPP9 (PubMed:31383852). Val-boroPro relieves inhibition of DPP8 and/or DPP9 by promoting disruption of the ternary complex, releasing its C-terminal part from autoinhibition (By similarity). Not activated by cleavage by B.anthracis lethal toxin (LT) endopeptidase (PubMed:20502689).</text>
</comment>
<comment type="subunit">
    <text evidence="1 4">Interacts (via LRR repeats) with BCL2 and BCL2L1 (via the loop between motifs BH4 and BH3). Interacts with NOD2; this interaction is enhanced in the presence of muramyl dipeptide (MDP) and increases IL1B release. Interacts with EIF2AK2/PKR; this interaction requires EIF2AK2 activity, is accompanied by EIF2AK2 autophosphorylation and promotes inflammasome assembly in response to danger-associated signals. Interacts with MEFV; this interaction targets Nlrp1a to degradation by autophagy, hence preventing excessive IL1B- and IL18-mediated inflammation. Interacts with DPP9; leading to inhibit activation of the inflammasome (By similarity). DPP9 acts via formation of a ternary complex, composed of a DPP9 homodimer, one full-length NLRP1 protein, and one cleaved C-terminus of Nlrp1a (NACHT, LRR and PYD domains-containing protein 1a, C-terminus) (By similarity). Interacts with DPP8; leading to inhibit activation of the inflammasome, probably via formation of a ternary complex with DPP8 (By similarity).</text>
</comment>
<comment type="subunit">
    <molecule>NACHT, LRR and PYD domains-containing protein 1a, N-terminus</molecule>
    <text evidence="4">Interacts with the C-terminal part of Nlrp1a (NACHT, LRR and PYD domains-containing protein 1a, C-terminus) in absence of pathogens and other damage-associated signals.</text>
</comment>
<comment type="subunit">
    <molecule>NACHT, LRR and PYD domains-containing protein 1a, C-terminus</molecule>
    <text evidence="4">Interacts with the N-terminal part of Nlrp1a (NACHT, LRR and PYD domains-containing protein 1a, N-terminus) in absence of pathogens and other damage-associated signals (By similarity). Homomultimer; forms the Nlrp1a inflammasome polymeric complex, a filament composed of homopolymers of this form in response to pathogens and other damage-associated signals (By similarity). The Nlrp1a inflammasome polymeric complex directly recruits pro-caspase-1 (proCASP1) independently of PYCARD/ASC (By similarity). Interacts (via CARD domain) with CASP1 (via CARD domain); leading to CASP1 activation (By similarity).</text>
</comment>
<comment type="subcellular location">
    <subcellularLocation>
        <location evidence="4">Cytoplasm</location>
        <location evidence="4">Cytosol</location>
    </subcellularLocation>
    <subcellularLocation>
        <location evidence="4">Cytoplasm</location>
    </subcellularLocation>
    <subcellularLocation>
        <location evidence="4">Nucleus</location>
    </subcellularLocation>
</comment>
<comment type="subcellular location">
    <molecule>NACHT, LRR and PYD domains-containing protein 1a, C-terminus</molecule>
    <subcellularLocation>
        <location evidence="4">Inflammasome</location>
    </subcellularLocation>
</comment>
<comment type="domain">
    <text evidence="3">The leucine-rich repeat (LRR) domain may be involved in autoinhibition in the absence of activating signal, possibly through intramolecular interaction with the NACHT domain.</text>
</comment>
<comment type="domain">
    <text evidence="3">The FIIND (domain with function to find) region is involved in homomerization, but not in CASP1-binding. Autocatalytic cleavage in this region occurs constitutively, prior to activation signals, and is required for inflammasome activity (IL1B release), possibly by facilitating CASP1 binding. Both N- and C-terminal fragments remain associated.</text>
</comment>
<comment type="domain">
    <molecule>NACHT, LRR and PYD domains-containing protein 1a, C-terminus</molecule>
    <text evidence="4">The C-terminal part of Nlrp1a oligomerizes to form the core of the Nlrp1a inflammasome filament: in the filament, the CARD domains form a central helical filaments that are promoted by oligomerized, but flexibly linked, UPA regions surrounding the filaments. The UPA region reduces the threshold needed for filament formation and signaling.</text>
</comment>
<comment type="PTM">
    <molecule>NACHT, LRR and PYD domains-containing protein 1a allele 3</molecule>
    <text evidence="4">Autocatalytically cleaved. Autocatalytic cleavage in FIIND region occurs constitutively, prior to activation signals, and is required for inflammasome activity (IL1B release), possibly by facilitating CASP1 binding. Both N- and C-terminal parts remain associated non-covalently.</text>
</comment>
<comment type="PTM">
    <molecule>NACHT, LRR and PYD domains-containing protein 1a, N-terminus</molecule>
    <text evidence="4">Ubiquitinated in response to pathogen-associated signals, leading to its degradation by the proteasome and subsequent release of the cleaved C-terminal part of the protein (NACHT, LRR and PYD domains-containing protein 1a, C-terminus), which polymerizes and forms the Nlrp1a inflammasome.</text>
</comment>
<comment type="polymorphism">
    <text evidence="10">Nlrp1a gene is extremely polymorphic. 5 alleles have been described: 1 (AC D9I2F9), 2 (AC D9I2G3), 3 (this entry), 4 (AC D9I2G1) and 5 (AC D9I2G4).</text>
</comment>
<comment type="similarity">
    <text evidence="13">Belongs to the NLRP family.</text>
</comment>
<evidence type="ECO:0000250" key="1">
    <source>
        <dbReference type="UniProtKB" id="D9I2F9"/>
    </source>
</evidence>
<evidence type="ECO:0000250" key="2">
    <source>
        <dbReference type="UniProtKB" id="Q2LKU9"/>
    </source>
</evidence>
<evidence type="ECO:0000250" key="3">
    <source>
        <dbReference type="UniProtKB" id="Q2LKW6"/>
    </source>
</evidence>
<evidence type="ECO:0000250" key="4">
    <source>
        <dbReference type="UniProtKB" id="Q9C000"/>
    </source>
</evidence>
<evidence type="ECO:0000255" key="5"/>
<evidence type="ECO:0000255" key="6">
    <source>
        <dbReference type="PROSITE-ProRule" id="PRU00046"/>
    </source>
</evidence>
<evidence type="ECO:0000255" key="7">
    <source>
        <dbReference type="PROSITE-ProRule" id="PRU00136"/>
    </source>
</evidence>
<evidence type="ECO:0000255" key="8">
    <source>
        <dbReference type="PROSITE-ProRule" id="PRU01174"/>
    </source>
</evidence>
<evidence type="ECO:0000256" key="9">
    <source>
        <dbReference type="SAM" id="MobiDB-lite"/>
    </source>
</evidence>
<evidence type="ECO:0000269" key="10">
    <source>
    </source>
</evidence>
<evidence type="ECO:0000269" key="11">
    <source>
    </source>
</evidence>
<evidence type="ECO:0000303" key="12">
    <source>
    </source>
</evidence>
<evidence type="ECO:0000305" key="13"/>
<evidence type="ECO:0000312" key="14">
    <source>
        <dbReference type="EMBL" id="ADI96236.1"/>
    </source>
</evidence>
<keyword id="KW-0067">ATP-binding</keyword>
<keyword id="KW-0963">Cytoplasm</keyword>
<keyword id="KW-0378">Hydrolase</keyword>
<keyword id="KW-0391">Immunity</keyword>
<keyword id="KW-1271">Inflammasome</keyword>
<keyword id="KW-0395">Inflammatory response</keyword>
<keyword id="KW-0399">Innate immunity</keyword>
<keyword id="KW-0433">Leucine-rich repeat</keyword>
<keyword id="KW-1210">Necrosis</keyword>
<keyword id="KW-0547">Nucleotide-binding</keyword>
<keyword id="KW-0539">Nucleus</keyword>
<keyword id="KW-0645">Protease</keyword>
<keyword id="KW-0677">Repeat</keyword>
<keyword id="KW-0832">Ubl conjugation</keyword>